<keyword id="KW-0067">ATP-binding</keyword>
<keyword id="KW-0963">Cytoplasm</keyword>
<keyword id="KW-0547">Nucleotide-binding</keyword>
<keyword id="KW-0548">Nucleotidyltransferase</keyword>
<keyword id="KW-0808">Transferase</keyword>
<keyword id="KW-0819">tRNA processing</keyword>
<protein>
    <recommendedName>
        <fullName evidence="1">Threonylcarbamoyl-AMP synthase</fullName>
        <shortName evidence="1">TC-AMP synthase</shortName>
        <ecNumber evidence="1">2.7.7.87</ecNumber>
    </recommendedName>
    <alternativeName>
        <fullName evidence="1">L-threonylcarbamoyladenylate synthase</fullName>
    </alternativeName>
    <alternativeName>
        <fullName evidence="1">t(6)A37 threonylcarbamoyladenosine biosynthesis protein TsaC</fullName>
    </alternativeName>
    <alternativeName>
        <fullName evidence="1">tRNA threonylcarbamoyladenosine biosynthesis protein TsaC</fullName>
    </alternativeName>
</protein>
<reference key="1">
    <citation type="journal article" date="2005" name="Jpn. Agric. Res. Q.">
        <title>Genome sequence of Xanthomonas oryzae pv. oryzae suggests contribution of large numbers of effector genes and insertion sequences to its race diversity.</title>
        <authorList>
            <person name="Ochiai H."/>
            <person name="Inoue Y."/>
            <person name="Takeya M."/>
            <person name="Sasaki A."/>
            <person name="Kaku H."/>
        </authorList>
    </citation>
    <scope>NUCLEOTIDE SEQUENCE [LARGE SCALE GENOMIC DNA]</scope>
    <source>
        <strain>MAFF 311018</strain>
    </source>
</reference>
<dbReference type="EC" id="2.7.7.87" evidence="1"/>
<dbReference type="EMBL" id="AP008229">
    <property type="protein sequence ID" value="BAE67294.1"/>
    <property type="molecule type" value="Genomic_DNA"/>
</dbReference>
<dbReference type="RefSeq" id="WP_011257486.1">
    <property type="nucleotide sequence ID" value="NC_007705.1"/>
</dbReference>
<dbReference type="SMR" id="Q2P833"/>
<dbReference type="KEGG" id="xom:XOO0539"/>
<dbReference type="HOGENOM" id="CLU_031397_6_0_6"/>
<dbReference type="GO" id="GO:0005737">
    <property type="term" value="C:cytoplasm"/>
    <property type="evidence" value="ECO:0007669"/>
    <property type="project" value="UniProtKB-SubCell"/>
</dbReference>
<dbReference type="GO" id="GO:0005524">
    <property type="term" value="F:ATP binding"/>
    <property type="evidence" value="ECO:0007669"/>
    <property type="project" value="UniProtKB-UniRule"/>
</dbReference>
<dbReference type="GO" id="GO:0003725">
    <property type="term" value="F:double-stranded RNA binding"/>
    <property type="evidence" value="ECO:0007669"/>
    <property type="project" value="InterPro"/>
</dbReference>
<dbReference type="GO" id="GO:0061710">
    <property type="term" value="F:L-threonylcarbamoyladenylate synthase"/>
    <property type="evidence" value="ECO:0007669"/>
    <property type="project" value="UniProtKB-EC"/>
</dbReference>
<dbReference type="GO" id="GO:0000049">
    <property type="term" value="F:tRNA binding"/>
    <property type="evidence" value="ECO:0007669"/>
    <property type="project" value="TreeGrafter"/>
</dbReference>
<dbReference type="GO" id="GO:0006450">
    <property type="term" value="P:regulation of translational fidelity"/>
    <property type="evidence" value="ECO:0007669"/>
    <property type="project" value="TreeGrafter"/>
</dbReference>
<dbReference type="GO" id="GO:0002949">
    <property type="term" value="P:tRNA threonylcarbamoyladenosine modification"/>
    <property type="evidence" value="ECO:0007669"/>
    <property type="project" value="UniProtKB-UniRule"/>
</dbReference>
<dbReference type="FunFam" id="3.90.870.10:FF:000004">
    <property type="entry name" value="Threonylcarbamoyl-AMP synthase"/>
    <property type="match status" value="1"/>
</dbReference>
<dbReference type="Gene3D" id="3.90.870.10">
    <property type="entry name" value="DHBP synthase"/>
    <property type="match status" value="1"/>
</dbReference>
<dbReference type="HAMAP" id="MF_01852">
    <property type="entry name" value="TsaC"/>
    <property type="match status" value="1"/>
</dbReference>
<dbReference type="InterPro" id="IPR017945">
    <property type="entry name" value="DHBP_synth_RibB-like_a/b_dom"/>
</dbReference>
<dbReference type="InterPro" id="IPR006070">
    <property type="entry name" value="Sua5-like_dom"/>
</dbReference>
<dbReference type="InterPro" id="IPR023535">
    <property type="entry name" value="TC-AMP_synthase"/>
</dbReference>
<dbReference type="InterPro" id="IPR050156">
    <property type="entry name" value="TC-AMP_synthase_SUA5"/>
</dbReference>
<dbReference type="PANTHER" id="PTHR17490">
    <property type="entry name" value="SUA5"/>
    <property type="match status" value="1"/>
</dbReference>
<dbReference type="PANTHER" id="PTHR17490:SF18">
    <property type="entry name" value="THREONYLCARBAMOYL-AMP SYNTHASE"/>
    <property type="match status" value="1"/>
</dbReference>
<dbReference type="Pfam" id="PF01300">
    <property type="entry name" value="Sua5_yciO_yrdC"/>
    <property type="match status" value="1"/>
</dbReference>
<dbReference type="SUPFAM" id="SSF55821">
    <property type="entry name" value="YrdC/RibB"/>
    <property type="match status" value="1"/>
</dbReference>
<dbReference type="PROSITE" id="PS51163">
    <property type="entry name" value="YRDC"/>
    <property type="match status" value="1"/>
</dbReference>
<proteinExistence type="inferred from homology"/>
<gene>
    <name evidence="1" type="primary">tsaC</name>
    <name type="synonym">rimN</name>
    <name type="ordered locus">XOO0539</name>
</gene>
<name>TSAC_XANOM</name>
<sequence length="187" mass="19884">MTHILTLDNAVATLTQGGVIAYPTEAVWGLGCDPRQEAAVLRLLEIKRRPVDKGVIVVTSRVDVLRDWVDIDALAPARRQDVLASWPGPHTWILPVTARAPRWVTGEHDGLAVRISAHPVVAALCAAWGAPLVSTSANLAGEPPARSRAALEPALLATIDGVVDGEVGALAQPTRIRDARSGQILRD</sequence>
<comment type="function">
    <text evidence="1">Required for the formation of a threonylcarbamoyl group on adenosine at position 37 (t(6)A37) in tRNAs that read codons beginning with adenine. Catalyzes the conversion of L-threonine, HCO(3)(-)/CO(2) and ATP to give threonylcarbamoyl-AMP (TC-AMP) as the acyladenylate intermediate, with the release of diphosphate.</text>
</comment>
<comment type="catalytic activity">
    <reaction evidence="1">
        <text>L-threonine + hydrogencarbonate + ATP = L-threonylcarbamoyladenylate + diphosphate + H2O</text>
        <dbReference type="Rhea" id="RHEA:36407"/>
        <dbReference type="ChEBI" id="CHEBI:15377"/>
        <dbReference type="ChEBI" id="CHEBI:17544"/>
        <dbReference type="ChEBI" id="CHEBI:30616"/>
        <dbReference type="ChEBI" id="CHEBI:33019"/>
        <dbReference type="ChEBI" id="CHEBI:57926"/>
        <dbReference type="ChEBI" id="CHEBI:73682"/>
        <dbReference type="EC" id="2.7.7.87"/>
    </reaction>
</comment>
<comment type="subcellular location">
    <subcellularLocation>
        <location evidence="1">Cytoplasm</location>
    </subcellularLocation>
</comment>
<comment type="similarity">
    <text evidence="1">Belongs to the SUA5 family. TsaC subfamily.</text>
</comment>
<evidence type="ECO:0000255" key="1">
    <source>
        <dbReference type="HAMAP-Rule" id="MF_01852"/>
    </source>
</evidence>
<accession>Q2P833</accession>
<feature type="chain" id="PRO_0000353015" description="Threonylcarbamoyl-AMP synthase">
    <location>
        <begin position="1"/>
        <end position="187"/>
    </location>
</feature>
<feature type="domain" description="YrdC-like" evidence="1">
    <location>
        <begin position="4"/>
        <end position="187"/>
    </location>
</feature>
<organism>
    <name type="scientific">Xanthomonas oryzae pv. oryzae (strain MAFF 311018)</name>
    <dbReference type="NCBI Taxonomy" id="342109"/>
    <lineage>
        <taxon>Bacteria</taxon>
        <taxon>Pseudomonadati</taxon>
        <taxon>Pseudomonadota</taxon>
        <taxon>Gammaproteobacteria</taxon>
        <taxon>Lysobacterales</taxon>
        <taxon>Lysobacteraceae</taxon>
        <taxon>Xanthomonas</taxon>
    </lineage>
</organism>